<sequence length="443" mass="47447">MAIYEDKIDLYDANGKLLDENVPLEAISPLKNPTIGKIVNDVKRSVAVNLAGIENSLKKAALGGKANFIPGRELDLDIVENAEIIAEKIKKMVQVDENDDTNVKMINNGQQLLVQVPTIRIERAADYTVSTLVAGAATIQAIIDTFDVDMFDASTVKTAVLGRYPQTVDFTGANVAAMLSPPVLLEGLGYGLRNILTNHIVATTKKNTLNAAALSSILEQTAMFETGDAVGAFERLHLLGLAYQGLNADNLVYDLVKENKKGTVGTVIASLVERAIEDKVIKVSKEMPSGFRVYEPIDWALWNAYAAAGLLAATIVNIGAARAAQGVASTVLYYNDILEYETGLPGVDFGRAEGTAVGFSFFSHSIYGGGGPGIFHGNHVVTRHSKGFALPCVAAAMSLDAGTQMFSPERTSGLVGQVYSEIDYFREPIKYVAEGAAKIKNKI</sequence>
<gene>
    <name type="primary">mrtB</name>
    <name type="synonym">mcrIIB</name>
    <name type="ordered locus">Mfer_0731</name>
</gene>
<feature type="chain" id="PRO_0000147464" description="Methyl-coenzyme M reductase II subunit beta">
    <location>
        <begin position="1"/>
        <end position="443"/>
    </location>
</feature>
<feature type="binding site" evidence="1">
    <location>
        <position position="367"/>
    </location>
    <ligand>
        <name>coenzyme M</name>
        <dbReference type="ChEBI" id="CHEBI:58319"/>
    </ligand>
</feature>
<feature type="binding site" evidence="1">
    <location>
        <position position="369"/>
    </location>
    <ligand>
        <name>coenzyme B</name>
        <dbReference type="ChEBI" id="CHEBI:58596"/>
    </ligand>
</feature>
<proteinExistence type="inferred from homology"/>
<dbReference type="EC" id="2.8.4.1" evidence="1"/>
<dbReference type="EMBL" id="X70765">
    <property type="protein sequence ID" value="CAA50041.1"/>
    <property type="molecule type" value="Genomic_DNA"/>
</dbReference>
<dbReference type="EMBL" id="CP002278">
    <property type="protein sequence ID" value="ADP77530.1"/>
    <property type="molecule type" value="Genomic_DNA"/>
</dbReference>
<dbReference type="EMBL" id="M99219">
    <property type="protein sequence ID" value="AAA73384.1"/>
    <property type="molecule type" value="Genomic_DNA"/>
</dbReference>
<dbReference type="PIR" id="S43899">
    <property type="entry name" value="S43899"/>
</dbReference>
<dbReference type="SMR" id="Q49171"/>
<dbReference type="STRING" id="523846.Mfer_0731"/>
<dbReference type="KEGG" id="mfv:Mfer_0731"/>
<dbReference type="HOGENOM" id="CLU_617682_0_0_2"/>
<dbReference type="OrthoDB" id="52873at2157"/>
<dbReference type="UniPathway" id="UPA00646">
    <property type="reaction ID" value="UER00699"/>
</dbReference>
<dbReference type="Proteomes" id="UP000002315">
    <property type="component" value="Chromosome"/>
</dbReference>
<dbReference type="GO" id="GO:0050524">
    <property type="term" value="F:coenzyme-B sulfoethylthiotransferase activity"/>
    <property type="evidence" value="ECO:0007669"/>
    <property type="project" value="UniProtKB-EC"/>
</dbReference>
<dbReference type="GO" id="GO:0015948">
    <property type="term" value="P:methanogenesis"/>
    <property type="evidence" value="ECO:0007669"/>
    <property type="project" value="UniProtKB-KW"/>
</dbReference>
<dbReference type="Gene3D" id="3.30.70.470">
    <property type="match status" value="1"/>
</dbReference>
<dbReference type="Gene3D" id="1.20.840.10">
    <property type="entry name" value="Methyl-coenzyme M reductase, alpha/beta subunit, C-terminal"/>
    <property type="match status" value="1"/>
</dbReference>
<dbReference type="InterPro" id="IPR008924">
    <property type="entry name" value="Me_CoM_Rdtase_asu/bsu_C"/>
</dbReference>
<dbReference type="InterPro" id="IPR015823">
    <property type="entry name" value="Me_CoM_Rdtase_asu_N_sub2"/>
</dbReference>
<dbReference type="InterPro" id="IPR003179">
    <property type="entry name" value="Me_CoM_Rdtase_bsu"/>
</dbReference>
<dbReference type="InterPro" id="IPR022679">
    <property type="entry name" value="Me_CoM_Rdtase_bsu_C"/>
</dbReference>
<dbReference type="InterPro" id="IPR022680">
    <property type="entry name" value="Me_CoM_Rdtase_bsu_N"/>
</dbReference>
<dbReference type="InterPro" id="IPR009024">
    <property type="entry name" value="Me_CoM_Rdtase_Fd-like_fold"/>
</dbReference>
<dbReference type="NCBIfam" id="TIGR03257">
    <property type="entry name" value="met_CoM_red_bet"/>
    <property type="match status" value="1"/>
</dbReference>
<dbReference type="Pfam" id="PF02241">
    <property type="entry name" value="MCR_beta"/>
    <property type="match status" value="1"/>
</dbReference>
<dbReference type="Pfam" id="PF02783">
    <property type="entry name" value="MCR_beta_N"/>
    <property type="match status" value="1"/>
</dbReference>
<dbReference type="PIRSF" id="PIRSF000263">
    <property type="entry name" value="Meth_CoM_rd_beta"/>
    <property type="match status" value="1"/>
</dbReference>
<dbReference type="SUPFAM" id="SSF48081">
    <property type="entry name" value="Methyl-coenzyme M reductase alpha and beta chain C-terminal domain"/>
    <property type="match status" value="1"/>
</dbReference>
<dbReference type="SUPFAM" id="SSF55088">
    <property type="entry name" value="Methyl-coenzyme M reductase subunits"/>
    <property type="match status" value="1"/>
</dbReference>
<reference key="1">
    <citation type="journal article" date="1994" name="Mol. Gen. Genet.">
        <title>Characterization and phylogeny of mcrII, a gene cluster encoding an isoenzyme of methyl coenzyme M reductase from hyperthermophilic Methanothermus fervidus.</title>
        <authorList>
            <person name="Lehmacher A."/>
            <person name="Klenk H.-P."/>
        </authorList>
    </citation>
    <scope>NUCLEOTIDE SEQUENCE [GENOMIC DNA]</scope>
    <source>
        <strain>ATCC 43054 / DSM 2088 / JCM 10308 / V24 S</strain>
    </source>
</reference>
<reference key="2">
    <citation type="journal article" date="2010" name="Stand. Genomic Sci.">
        <title>Complete genome sequence of Methanothermus fervidus type strain (V24S).</title>
        <authorList>
            <person name="Anderson I."/>
            <person name="Djao O.D."/>
            <person name="Misra M."/>
            <person name="Chertkov O."/>
            <person name="Nolan M."/>
            <person name="Lucas S."/>
            <person name="Lapidus A."/>
            <person name="Del Rio T.G."/>
            <person name="Tice H."/>
            <person name="Cheng J.F."/>
            <person name="Tapia R."/>
            <person name="Han C."/>
            <person name="Goodwin L."/>
            <person name="Pitluck S."/>
            <person name="Liolios K."/>
            <person name="Ivanova N."/>
            <person name="Mavromatis K."/>
            <person name="Mikhailova N."/>
            <person name="Pati A."/>
            <person name="Brambilla E."/>
            <person name="Chen A."/>
            <person name="Palaniappan K."/>
            <person name="Land M."/>
            <person name="Hauser L."/>
            <person name="Chang Y.J."/>
            <person name="Jeffries C.D."/>
            <person name="Sikorski J."/>
            <person name="Spring S."/>
            <person name="Rohde M."/>
            <person name="Eichinger K."/>
            <person name="Huber H."/>
            <person name="Wirth R."/>
            <person name="Goker M."/>
            <person name="Detter J.C."/>
            <person name="Woyke T."/>
            <person name="Bristow J."/>
            <person name="Eisen J.A."/>
            <person name="Markowitz V."/>
            <person name="Hugenholtz P."/>
            <person name="Klenk H.P."/>
            <person name="Kyrpides N.C."/>
        </authorList>
    </citation>
    <scope>NUCLEOTIDE SEQUENCE [LARGE SCALE GENOMIC DNA]</scope>
    <source>
        <strain>ATCC 43054 / DSM 2088 / JCM 10308 / V24 S</strain>
    </source>
</reference>
<reference key="3">
    <citation type="submission" date="1992-08" db="EMBL/GenBank/DDBJ databases">
        <authorList>
            <person name="Steigerwald V.J."/>
            <person name="Stroup D."/>
            <person name="Hennigan A.N."/>
            <person name="Pihl T.D."/>
            <person name="Reeve J.N."/>
        </authorList>
    </citation>
    <scope>NUCLEOTIDE SEQUENCE [GENOMIC DNA] OF 1-125</scope>
</reference>
<evidence type="ECO:0000250" key="1">
    <source>
        <dbReference type="UniProtKB" id="P11560"/>
    </source>
</evidence>
<evidence type="ECO:0000305" key="2"/>
<organism>
    <name type="scientific">Methanothermus fervidus (strain ATCC 43054 / DSM 2088 / JCM 10308 / V24 S)</name>
    <dbReference type="NCBI Taxonomy" id="523846"/>
    <lineage>
        <taxon>Archaea</taxon>
        <taxon>Methanobacteriati</taxon>
        <taxon>Methanobacteriota</taxon>
        <taxon>Methanomada group</taxon>
        <taxon>Methanobacteria</taxon>
        <taxon>Methanobacteriales</taxon>
        <taxon>Methanothermaceae</taxon>
        <taxon>Methanothermus</taxon>
    </lineage>
</organism>
<keyword id="KW-0484">Methanogenesis</keyword>
<keyword id="KW-1185">Reference proteome</keyword>
<keyword id="KW-0808">Transferase</keyword>
<comment type="function">
    <text evidence="1">Component of the methyl-coenzyme M reductase (MCR) I that catalyzes the reductive cleavage of methyl-coenzyme M (CoM-S-CH3 or 2-(methylthio)ethanesulfonate) using coenzyme B (CoB or 7-mercaptoheptanoylthreonine phosphate) as reductant which results in the production of methane and the mixed heterodisulfide of CoB and CoM (CoM-S-S-CoB). This is the final step in methanogenesis.</text>
</comment>
<comment type="catalytic activity">
    <reaction evidence="1">
        <text>coenzyme B + methyl-coenzyme M = methane + coenzyme M-coenzyme B heterodisulfide</text>
        <dbReference type="Rhea" id="RHEA:12532"/>
        <dbReference type="ChEBI" id="CHEBI:16183"/>
        <dbReference type="ChEBI" id="CHEBI:58286"/>
        <dbReference type="ChEBI" id="CHEBI:58411"/>
        <dbReference type="ChEBI" id="CHEBI:58596"/>
        <dbReference type="EC" id="2.8.4.1"/>
    </reaction>
    <physiologicalReaction direction="left-to-right" evidence="1">
        <dbReference type="Rhea" id="RHEA:12533"/>
    </physiologicalReaction>
</comment>
<comment type="cofactor">
    <cofactor evidence="1">
        <name>coenzyme F430</name>
        <dbReference type="ChEBI" id="CHEBI:60540"/>
    </cofactor>
    <text evidence="1">Binds 2 coenzyme F430 non-covalently per MCR complex. Coenzyme F430 is a yellow nickel porphinoid. Methyl-coenzyme-M reductase is activated when the enzyme-bound coenzyme F430 is reduced to the Ni(I) oxidation state.</text>
</comment>
<comment type="pathway">
    <text evidence="1">One-carbon metabolism; methyl-coenzyme M reduction; methane from methyl-coenzyme M: step 1/1.</text>
</comment>
<comment type="subunit">
    <text evidence="1">MCR is a hexamer of two alpha, two beta, and two gamma chains, forming a dimer of heterotrimers.</text>
</comment>
<comment type="similarity">
    <text evidence="2">Belongs to the methyl-coenzyme M reductase beta subunit family.</text>
</comment>
<accession>Q49171</accession>
<accession>E3GYZ8</accession>
<accession>Q49177</accession>
<name>MCRY_METFV</name>
<protein>
    <recommendedName>
        <fullName>Methyl-coenzyme M reductase II subunit beta</fullName>
        <shortName>MCR II beta</shortName>
        <ecNumber evidence="1">2.8.4.1</ecNumber>
    </recommendedName>
    <alternativeName>
        <fullName>Coenzyme-B sulfoethylthiotransferase beta</fullName>
    </alternativeName>
</protein>